<evidence type="ECO:0000255" key="1">
    <source>
        <dbReference type="HAMAP-Rule" id="MF_00093"/>
    </source>
</evidence>
<sequence length="361" mass="41182">MDNVMAQLESLEVRYEEIQEMMADPEVIADTKRYMEITKEEADMREVVQKFRKFKADKEEIAGNKEIIADGSDPELVEMAKMENSELEDEISQLEDEIKILMLPKDPNDDKDIIMEIRGAAGGDEASLFAGDLLRMYEKYAENQGWNVSIVDSEQTEVGGYKRAAIMITGNKVYSKLKYENGAHRVQRIPVTESAGRVHTSTATVAVMPEYEQVDIDLDPKEIRVDVYRSSGAGGQHINKTSSAVRMTHLPTGIVVAMQDQRSQQQNRAKAMEILKSRVYDYYESQNRDKYDAKRKNAVGTGDRSERIRTYNYPQNRVTDHRIGLTLNKLDRIMNGELDEVIDALTVYYQTKQLEELAENA</sequence>
<accession>Q1GAX5</accession>
<reference key="1">
    <citation type="journal article" date="2006" name="Proc. Natl. Acad. Sci. U.S.A.">
        <title>The complete genome sequence of Lactobacillus bulgaricus reveals extensive and ongoing reductive evolution.</title>
        <authorList>
            <person name="van de Guchte M."/>
            <person name="Penaud S."/>
            <person name="Grimaldi C."/>
            <person name="Barbe V."/>
            <person name="Bryson K."/>
            <person name="Nicolas P."/>
            <person name="Robert C."/>
            <person name="Oztas S."/>
            <person name="Mangenot S."/>
            <person name="Couloux A."/>
            <person name="Loux V."/>
            <person name="Dervyn R."/>
            <person name="Bossy R."/>
            <person name="Bolotin A."/>
            <person name="Batto J.-M."/>
            <person name="Walunas T."/>
            <person name="Gibrat J.-F."/>
            <person name="Bessieres P."/>
            <person name="Weissenbach J."/>
            <person name="Ehrlich S.D."/>
            <person name="Maguin E."/>
        </authorList>
    </citation>
    <scope>NUCLEOTIDE SEQUENCE [LARGE SCALE GENOMIC DNA]</scope>
    <source>
        <strain>ATCC 11842 / DSM 20081 / BCRC 10696 / JCM 1002 / NBRC 13953 / NCIMB 11778 / NCTC 12712 / WDCM 00102 / Lb 14</strain>
    </source>
</reference>
<proteinExistence type="inferred from homology"/>
<dbReference type="EMBL" id="CR954253">
    <property type="protein sequence ID" value="CAI97528.1"/>
    <property type="molecule type" value="Genomic_DNA"/>
</dbReference>
<dbReference type="RefSeq" id="WP_011543760.1">
    <property type="nucleotide sequence ID" value="NC_008054.1"/>
</dbReference>
<dbReference type="SMR" id="Q1GAX5"/>
<dbReference type="STRING" id="390333.Ldb0701"/>
<dbReference type="KEGG" id="ldb:Ldb0701"/>
<dbReference type="PATRIC" id="fig|390333.13.peg.100"/>
<dbReference type="eggNOG" id="COG0216">
    <property type="taxonomic scope" value="Bacteria"/>
</dbReference>
<dbReference type="HOGENOM" id="CLU_036856_0_1_9"/>
<dbReference type="BioCyc" id="LDEL390333:LDB_RS03045-MONOMER"/>
<dbReference type="Proteomes" id="UP000001259">
    <property type="component" value="Chromosome"/>
</dbReference>
<dbReference type="GO" id="GO:0005737">
    <property type="term" value="C:cytoplasm"/>
    <property type="evidence" value="ECO:0007669"/>
    <property type="project" value="UniProtKB-SubCell"/>
</dbReference>
<dbReference type="GO" id="GO:0016149">
    <property type="term" value="F:translation release factor activity, codon specific"/>
    <property type="evidence" value="ECO:0007669"/>
    <property type="project" value="UniProtKB-UniRule"/>
</dbReference>
<dbReference type="FunFam" id="3.30.160.20:FF:000004">
    <property type="entry name" value="Peptide chain release factor 1"/>
    <property type="match status" value="1"/>
</dbReference>
<dbReference type="FunFam" id="3.30.70.1660:FF:000002">
    <property type="entry name" value="Peptide chain release factor 1"/>
    <property type="match status" value="1"/>
</dbReference>
<dbReference type="FunFam" id="3.30.70.1660:FF:000004">
    <property type="entry name" value="Peptide chain release factor 1"/>
    <property type="match status" value="1"/>
</dbReference>
<dbReference type="Gene3D" id="3.30.160.20">
    <property type="match status" value="1"/>
</dbReference>
<dbReference type="Gene3D" id="3.30.70.1660">
    <property type="match status" value="2"/>
</dbReference>
<dbReference type="Gene3D" id="6.10.140.1950">
    <property type="match status" value="1"/>
</dbReference>
<dbReference type="HAMAP" id="MF_00093">
    <property type="entry name" value="Rel_fac_1"/>
    <property type="match status" value="1"/>
</dbReference>
<dbReference type="InterPro" id="IPR005139">
    <property type="entry name" value="PCRF"/>
</dbReference>
<dbReference type="InterPro" id="IPR000352">
    <property type="entry name" value="Pep_chain_release_fac_I"/>
</dbReference>
<dbReference type="InterPro" id="IPR045853">
    <property type="entry name" value="Pep_chain_release_fac_I_sf"/>
</dbReference>
<dbReference type="InterPro" id="IPR050057">
    <property type="entry name" value="Prokaryotic/Mito_RF"/>
</dbReference>
<dbReference type="InterPro" id="IPR004373">
    <property type="entry name" value="RF-1"/>
</dbReference>
<dbReference type="NCBIfam" id="TIGR00019">
    <property type="entry name" value="prfA"/>
    <property type="match status" value="1"/>
</dbReference>
<dbReference type="NCBIfam" id="NF001859">
    <property type="entry name" value="PRK00591.1"/>
    <property type="match status" value="1"/>
</dbReference>
<dbReference type="PANTHER" id="PTHR43804">
    <property type="entry name" value="LD18447P"/>
    <property type="match status" value="1"/>
</dbReference>
<dbReference type="PANTHER" id="PTHR43804:SF7">
    <property type="entry name" value="LD18447P"/>
    <property type="match status" value="1"/>
</dbReference>
<dbReference type="Pfam" id="PF03462">
    <property type="entry name" value="PCRF"/>
    <property type="match status" value="1"/>
</dbReference>
<dbReference type="Pfam" id="PF00472">
    <property type="entry name" value="RF-1"/>
    <property type="match status" value="1"/>
</dbReference>
<dbReference type="SMART" id="SM00937">
    <property type="entry name" value="PCRF"/>
    <property type="match status" value="1"/>
</dbReference>
<dbReference type="SUPFAM" id="SSF75620">
    <property type="entry name" value="Release factor"/>
    <property type="match status" value="1"/>
</dbReference>
<dbReference type="PROSITE" id="PS00745">
    <property type="entry name" value="RF_PROK_I"/>
    <property type="match status" value="1"/>
</dbReference>
<organism>
    <name type="scientific">Lactobacillus delbrueckii subsp. bulgaricus (strain ATCC 11842 / DSM 20081 / BCRC 10696 / JCM 1002 / NBRC 13953 / NCIMB 11778 / NCTC 12712 / WDCM 00102 / Lb 14)</name>
    <dbReference type="NCBI Taxonomy" id="390333"/>
    <lineage>
        <taxon>Bacteria</taxon>
        <taxon>Bacillati</taxon>
        <taxon>Bacillota</taxon>
        <taxon>Bacilli</taxon>
        <taxon>Lactobacillales</taxon>
        <taxon>Lactobacillaceae</taxon>
        <taxon>Lactobacillus</taxon>
    </lineage>
</organism>
<protein>
    <recommendedName>
        <fullName evidence="1">Peptide chain release factor 1</fullName>
        <shortName evidence="1">RF-1</shortName>
    </recommendedName>
</protein>
<gene>
    <name evidence="1" type="primary">prfA</name>
    <name type="ordered locus">Ldb0701</name>
</gene>
<keyword id="KW-0963">Cytoplasm</keyword>
<keyword id="KW-0488">Methylation</keyword>
<keyword id="KW-0648">Protein biosynthesis</keyword>
<keyword id="KW-1185">Reference proteome</keyword>
<comment type="function">
    <text evidence="1">Peptide chain release factor 1 directs the termination of translation in response to the peptide chain termination codons UAG and UAA.</text>
</comment>
<comment type="subcellular location">
    <subcellularLocation>
        <location evidence="1">Cytoplasm</location>
    </subcellularLocation>
</comment>
<comment type="PTM">
    <text evidence="1">Methylated by PrmC. Methylation increases the termination efficiency of RF1.</text>
</comment>
<comment type="similarity">
    <text evidence="1">Belongs to the prokaryotic/mitochondrial release factor family.</text>
</comment>
<feature type="chain" id="PRO_0000263289" description="Peptide chain release factor 1">
    <location>
        <begin position="1"/>
        <end position="361"/>
    </location>
</feature>
<feature type="modified residue" description="N5-methylglutamine" evidence="1">
    <location>
        <position position="236"/>
    </location>
</feature>
<name>RF1_LACDA</name>